<dbReference type="EMBL" id="CR382134">
    <property type="protein sequence ID" value="CAG85503.1"/>
    <property type="molecule type" value="Genomic_DNA"/>
</dbReference>
<dbReference type="RefSeq" id="XP_457499.1">
    <property type="nucleotide sequence ID" value="XM_457499.1"/>
</dbReference>
<dbReference type="SMR" id="Q6BWC0"/>
<dbReference type="FunCoup" id="Q6BWC0">
    <property type="interactions" value="1234"/>
</dbReference>
<dbReference type="STRING" id="284592.Q6BWC0"/>
<dbReference type="GeneID" id="2913451"/>
<dbReference type="KEGG" id="dha:DEHA2B12518g"/>
<dbReference type="VEuPathDB" id="FungiDB:DEHA2B12518g"/>
<dbReference type="eggNOG" id="KOG2104">
    <property type="taxonomic scope" value="Eukaryota"/>
</dbReference>
<dbReference type="HOGENOM" id="CLU_131642_0_0_1"/>
<dbReference type="InParanoid" id="Q6BWC0"/>
<dbReference type="OMA" id="QFVEYYY"/>
<dbReference type="OrthoDB" id="6507044at2759"/>
<dbReference type="Proteomes" id="UP000000599">
    <property type="component" value="Chromosome B"/>
</dbReference>
<dbReference type="GO" id="GO:0005737">
    <property type="term" value="C:cytoplasm"/>
    <property type="evidence" value="ECO:0007669"/>
    <property type="project" value="UniProtKB-SubCell"/>
</dbReference>
<dbReference type="GO" id="GO:0006913">
    <property type="term" value="P:nucleocytoplasmic transport"/>
    <property type="evidence" value="ECO:0007669"/>
    <property type="project" value="InterPro"/>
</dbReference>
<dbReference type="GO" id="GO:0015031">
    <property type="term" value="P:protein transport"/>
    <property type="evidence" value="ECO:0007669"/>
    <property type="project" value="UniProtKB-KW"/>
</dbReference>
<dbReference type="CDD" id="cd00780">
    <property type="entry name" value="NTF2"/>
    <property type="match status" value="1"/>
</dbReference>
<dbReference type="FunFam" id="3.10.450.50:FF:000005">
    <property type="entry name" value="Nuclear transport factor 2"/>
    <property type="match status" value="1"/>
</dbReference>
<dbReference type="Gene3D" id="3.10.450.50">
    <property type="match status" value="1"/>
</dbReference>
<dbReference type="InterPro" id="IPR045875">
    <property type="entry name" value="NTF2"/>
</dbReference>
<dbReference type="InterPro" id="IPR032710">
    <property type="entry name" value="NTF2-like_dom_sf"/>
</dbReference>
<dbReference type="InterPro" id="IPR002075">
    <property type="entry name" value="NTF2_dom"/>
</dbReference>
<dbReference type="InterPro" id="IPR018222">
    <property type="entry name" value="Nuclear_transport_factor_2_euk"/>
</dbReference>
<dbReference type="PANTHER" id="PTHR12612">
    <property type="entry name" value="NUCLEAR TRANSPORT FACTOR 2"/>
    <property type="match status" value="1"/>
</dbReference>
<dbReference type="Pfam" id="PF02136">
    <property type="entry name" value="NTF2"/>
    <property type="match status" value="1"/>
</dbReference>
<dbReference type="SUPFAM" id="SSF54427">
    <property type="entry name" value="NTF2-like"/>
    <property type="match status" value="1"/>
</dbReference>
<dbReference type="PROSITE" id="PS50177">
    <property type="entry name" value="NTF2_DOMAIN"/>
    <property type="match status" value="1"/>
</dbReference>
<evidence type="ECO:0000250" key="1"/>
<evidence type="ECO:0000255" key="2">
    <source>
        <dbReference type="PROSITE-ProRule" id="PRU00137"/>
    </source>
</evidence>
<proteinExistence type="inferred from homology"/>
<name>NTF2_DEBHA</name>
<gene>
    <name type="primary">NTF2</name>
    <name type="ordered locus">DEHA2B12518g</name>
</gene>
<sequence length="124" mass="14249">MSVDFNTVASEFCNFYYQQFDSDRTQLGNLYREQSMLTFETSQLQGAKDIVEKLVSLPFQKVAHRISTLDAQPGSPNGDILVMVTGELIIDDEQNAQRYSQVFHLIPDGNSYYVFNDIFRLNYS</sequence>
<organism>
    <name type="scientific">Debaryomyces hansenii (strain ATCC 36239 / CBS 767 / BCRC 21394 / JCM 1990 / NBRC 0083 / IGC 2968)</name>
    <name type="common">Yeast</name>
    <name type="synonym">Torulaspora hansenii</name>
    <dbReference type="NCBI Taxonomy" id="284592"/>
    <lineage>
        <taxon>Eukaryota</taxon>
        <taxon>Fungi</taxon>
        <taxon>Dikarya</taxon>
        <taxon>Ascomycota</taxon>
        <taxon>Saccharomycotina</taxon>
        <taxon>Pichiomycetes</taxon>
        <taxon>Debaryomycetaceae</taxon>
        <taxon>Debaryomyces</taxon>
    </lineage>
</organism>
<feature type="chain" id="PRO_0000194786" description="Nuclear transport factor 2">
    <location>
        <begin position="1"/>
        <end position="124"/>
    </location>
</feature>
<feature type="domain" description="NTF2" evidence="2">
    <location>
        <begin position="8"/>
        <end position="121"/>
    </location>
</feature>
<keyword id="KW-0963">Cytoplasm</keyword>
<keyword id="KW-0653">Protein transport</keyword>
<keyword id="KW-1185">Reference proteome</keyword>
<keyword id="KW-0813">Transport</keyword>
<accession>Q6BWC0</accession>
<protein>
    <recommendedName>
        <fullName>Nuclear transport factor 2</fullName>
        <shortName>NTF-2</shortName>
    </recommendedName>
</protein>
<reference key="1">
    <citation type="journal article" date="2004" name="Nature">
        <title>Genome evolution in yeasts.</title>
        <authorList>
            <person name="Dujon B."/>
            <person name="Sherman D."/>
            <person name="Fischer G."/>
            <person name="Durrens P."/>
            <person name="Casaregola S."/>
            <person name="Lafontaine I."/>
            <person name="de Montigny J."/>
            <person name="Marck C."/>
            <person name="Neuveglise C."/>
            <person name="Talla E."/>
            <person name="Goffard N."/>
            <person name="Frangeul L."/>
            <person name="Aigle M."/>
            <person name="Anthouard V."/>
            <person name="Babour A."/>
            <person name="Barbe V."/>
            <person name="Barnay S."/>
            <person name="Blanchin S."/>
            <person name="Beckerich J.-M."/>
            <person name="Beyne E."/>
            <person name="Bleykasten C."/>
            <person name="Boisrame A."/>
            <person name="Boyer J."/>
            <person name="Cattolico L."/>
            <person name="Confanioleri F."/>
            <person name="de Daruvar A."/>
            <person name="Despons L."/>
            <person name="Fabre E."/>
            <person name="Fairhead C."/>
            <person name="Ferry-Dumazet H."/>
            <person name="Groppi A."/>
            <person name="Hantraye F."/>
            <person name="Hennequin C."/>
            <person name="Jauniaux N."/>
            <person name="Joyet P."/>
            <person name="Kachouri R."/>
            <person name="Kerrest A."/>
            <person name="Koszul R."/>
            <person name="Lemaire M."/>
            <person name="Lesur I."/>
            <person name="Ma L."/>
            <person name="Muller H."/>
            <person name="Nicaud J.-M."/>
            <person name="Nikolski M."/>
            <person name="Oztas S."/>
            <person name="Ozier-Kalogeropoulos O."/>
            <person name="Pellenz S."/>
            <person name="Potier S."/>
            <person name="Richard G.-F."/>
            <person name="Straub M.-L."/>
            <person name="Suleau A."/>
            <person name="Swennen D."/>
            <person name="Tekaia F."/>
            <person name="Wesolowski-Louvel M."/>
            <person name="Westhof E."/>
            <person name="Wirth B."/>
            <person name="Zeniou-Meyer M."/>
            <person name="Zivanovic Y."/>
            <person name="Bolotin-Fukuhara M."/>
            <person name="Thierry A."/>
            <person name="Bouchier C."/>
            <person name="Caudron B."/>
            <person name="Scarpelli C."/>
            <person name="Gaillardin C."/>
            <person name="Weissenbach J."/>
            <person name="Wincker P."/>
            <person name="Souciet J.-L."/>
        </authorList>
    </citation>
    <scope>NUCLEOTIDE SEQUENCE [LARGE SCALE GENOMIC DNA]</scope>
    <source>
        <strain>ATCC 36239 / CBS 767 / BCRC 21394 / JCM 1990 / NBRC 0083 / IGC 2968</strain>
    </source>
</reference>
<comment type="function">
    <text evidence="1">Facilitates protein transport into the nucleus. Could be part of a multicomponent system of cytosolic factors that assemble at the pore complex during nuclear import (By similarity).</text>
</comment>
<comment type="subcellular location">
    <subcellularLocation>
        <location evidence="1">Cytoplasm</location>
    </subcellularLocation>
</comment>